<reference key="1">
    <citation type="journal article" date="2005" name="J. Bacteriol.">
        <title>Genomic sequence of an otitis media isolate of nontypeable Haemophilus influenzae: comparative study with H. influenzae serotype d, strain KW20.</title>
        <authorList>
            <person name="Harrison A."/>
            <person name="Dyer D.W."/>
            <person name="Gillaspy A."/>
            <person name="Ray W.C."/>
            <person name="Mungur R."/>
            <person name="Carson M.B."/>
            <person name="Zhong H."/>
            <person name="Gipson J."/>
            <person name="Gipson M."/>
            <person name="Johnson L.S."/>
            <person name="Lewis L."/>
            <person name="Bakaletz L.O."/>
            <person name="Munson R.S. Jr."/>
        </authorList>
    </citation>
    <scope>NUCLEOTIDE SEQUENCE [LARGE SCALE GENOMIC DNA]</scope>
    <source>
        <strain>86-028NP</strain>
    </source>
</reference>
<sequence length="151" mass="17162">MFRGATAVNLDSKGRVAIPTRYRAEILEKNQGQMVCTVDIRQSCLLLYPLDEWEKIEQKLLALSNFDPTQRRLQRVMLGHATECEMDAQGRILLSGPLRQHAKLEKGLMLVGQLNKFEIWSDVEWHTQIAEDIEIGSSTDFAADALNDFSL</sequence>
<organism>
    <name type="scientific">Haemophilus influenzae (strain 86-028NP)</name>
    <dbReference type="NCBI Taxonomy" id="281310"/>
    <lineage>
        <taxon>Bacteria</taxon>
        <taxon>Pseudomonadati</taxon>
        <taxon>Pseudomonadota</taxon>
        <taxon>Gammaproteobacteria</taxon>
        <taxon>Pasteurellales</taxon>
        <taxon>Pasteurellaceae</taxon>
        <taxon>Haemophilus</taxon>
    </lineage>
</organism>
<proteinExistence type="inferred from homology"/>
<accession>Q4QLG7</accession>
<feature type="chain" id="PRO_0000230087" description="Transcriptional regulator MraZ">
    <location>
        <begin position="1"/>
        <end position="151"/>
    </location>
</feature>
<feature type="domain" description="SpoVT-AbrB 1" evidence="2">
    <location>
        <begin position="5"/>
        <end position="52"/>
    </location>
</feature>
<feature type="domain" description="SpoVT-AbrB 2" evidence="2">
    <location>
        <begin position="81"/>
        <end position="124"/>
    </location>
</feature>
<dbReference type="EMBL" id="CP000057">
    <property type="protein sequence ID" value="AAX88130.1"/>
    <property type="molecule type" value="Genomic_DNA"/>
</dbReference>
<dbReference type="RefSeq" id="WP_005686427.1">
    <property type="nucleotide sequence ID" value="NC_007146.2"/>
</dbReference>
<dbReference type="SMR" id="Q4QLG7"/>
<dbReference type="KEGG" id="hit:NTHI1296"/>
<dbReference type="HOGENOM" id="CLU_107907_2_0_6"/>
<dbReference type="Proteomes" id="UP000002525">
    <property type="component" value="Chromosome"/>
</dbReference>
<dbReference type="GO" id="GO:0005737">
    <property type="term" value="C:cytoplasm"/>
    <property type="evidence" value="ECO:0007669"/>
    <property type="project" value="UniProtKB-UniRule"/>
</dbReference>
<dbReference type="GO" id="GO:0009295">
    <property type="term" value="C:nucleoid"/>
    <property type="evidence" value="ECO:0007669"/>
    <property type="project" value="UniProtKB-SubCell"/>
</dbReference>
<dbReference type="GO" id="GO:0003700">
    <property type="term" value="F:DNA-binding transcription factor activity"/>
    <property type="evidence" value="ECO:0007669"/>
    <property type="project" value="UniProtKB-UniRule"/>
</dbReference>
<dbReference type="GO" id="GO:0000976">
    <property type="term" value="F:transcription cis-regulatory region binding"/>
    <property type="evidence" value="ECO:0007669"/>
    <property type="project" value="TreeGrafter"/>
</dbReference>
<dbReference type="GO" id="GO:2000143">
    <property type="term" value="P:negative regulation of DNA-templated transcription initiation"/>
    <property type="evidence" value="ECO:0007669"/>
    <property type="project" value="TreeGrafter"/>
</dbReference>
<dbReference type="CDD" id="cd16321">
    <property type="entry name" value="MraZ_C"/>
    <property type="match status" value="1"/>
</dbReference>
<dbReference type="CDD" id="cd16320">
    <property type="entry name" value="MraZ_N"/>
    <property type="match status" value="1"/>
</dbReference>
<dbReference type="FunFam" id="3.40.1550.20:FF:000001">
    <property type="entry name" value="Transcriptional regulator MraZ"/>
    <property type="match status" value="1"/>
</dbReference>
<dbReference type="Gene3D" id="3.40.1550.20">
    <property type="entry name" value="Transcriptional regulator MraZ domain"/>
    <property type="match status" value="1"/>
</dbReference>
<dbReference type="HAMAP" id="MF_01008">
    <property type="entry name" value="MraZ"/>
    <property type="match status" value="1"/>
</dbReference>
<dbReference type="InterPro" id="IPR003444">
    <property type="entry name" value="MraZ"/>
</dbReference>
<dbReference type="InterPro" id="IPR035644">
    <property type="entry name" value="MraZ_C"/>
</dbReference>
<dbReference type="InterPro" id="IPR020603">
    <property type="entry name" value="MraZ_dom"/>
</dbReference>
<dbReference type="InterPro" id="IPR035642">
    <property type="entry name" value="MraZ_N"/>
</dbReference>
<dbReference type="InterPro" id="IPR038619">
    <property type="entry name" value="MraZ_sf"/>
</dbReference>
<dbReference type="InterPro" id="IPR007159">
    <property type="entry name" value="SpoVT-AbrB_dom"/>
</dbReference>
<dbReference type="InterPro" id="IPR037914">
    <property type="entry name" value="SpoVT-AbrB_sf"/>
</dbReference>
<dbReference type="NCBIfam" id="TIGR00242">
    <property type="entry name" value="division/cell wall cluster transcriptional repressor MraZ"/>
    <property type="match status" value="1"/>
</dbReference>
<dbReference type="PANTHER" id="PTHR34701">
    <property type="entry name" value="TRANSCRIPTIONAL REGULATOR MRAZ"/>
    <property type="match status" value="1"/>
</dbReference>
<dbReference type="PANTHER" id="PTHR34701:SF1">
    <property type="entry name" value="TRANSCRIPTIONAL REGULATOR MRAZ"/>
    <property type="match status" value="1"/>
</dbReference>
<dbReference type="Pfam" id="PF02381">
    <property type="entry name" value="MraZ"/>
    <property type="match status" value="2"/>
</dbReference>
<dbReference type="SUPFAM" id="SSF89447">
    <property type="entry name" value="AbrB/MazE/MraZ-like"/>
    <property type="match status" value="1"/>
</dbReference>
<dbReference type="PROSITE" id="PS51740">
    <property type="entry name" value="SPOVT_ABRB"/>
    <property type="match status" value="2"/>
</dbReference>
<protein>
    <recommendedName>
        <fullName>Transcriptional regulator MraZ</fullName>
    </recommendedName>
</protein>
<evidence type="ECO:0000255" key="1">
    <source>
        <dbReference type="HAMAP-Rule" id="MF_01008"/>
    </source>
</evidence>
<evidence type="ECO:0000255" key="2">
    <source>
        <dbReference type="PROSITE-ProRule" id="PRU01076"/>
    </source>
</evidence>
<gene>
    <name evidence="1" type="primary">mraZ</name>
    <name type="ordered locus">NTHI1296</name>
</gene>
<keyword id="KW-0963">Cytoplasm</keyword>
<keyword id="KW-0238">DNA-binding</keyword>
<keyword id="KW-0677">Repeat</keyword>
<keyword id="KW-0804">Transcription</keyword>
<keyword id="KW-0805">Transcription regulation</keyword>
<comment type="subunit">
    <text evidence="1">Forms oligomers.</text>
</comment>
<comment type="subcellular location">
    <subcellularLocation>
        <location evidence="1">Cytoplasm</location>
        <location evidence="1">Nucleoid</location>
    </subcellularLocation>
</comment>
<comment type="similarity">
    <text evidence="1">Belongs to the MraZ family.</text>
</comment>
<name>MRAZ_HAEI8</name>